<reference key="1">
    <citation type="journal article" date="2007" name="PLoS Genet.">
        <title>Meningococcal genetic variation mechanisms viewed through comparative analysis of serogroup C strain FAM18.</title>
        <authorList>
            <person name="Bentley S.D."/>
            <person name="Vernikos G.S."/>
            <person name="Snyder L.A.S."/>
            <person name="Churcher C."/>
            <person name="Arrowsmith C."/>
            <person name="Chillingworth T."/>
            <person name="Cronin A."/>
            <person name="Davis P.H."/>
            <person name="Holroyd N.E."/>
            <person name="Jagels K."/>
            <person name="Maddison M."/>
            <person name="Moule S."/>
            <person name="Rabbinowitsch E."/>
            <person name="Sharp S."/>
            <person name="Unwin L."/>
            <person name="Whitehead S."/>
            <person name="Quail M.A."/>
            <person name="Achtman M."/>
            <person name="Barrell B.G."/>
            <person name="Saunders N.J."/>
            <person name="Parkhill J."/>
        </authorList>
    </citation>
    <scope>NUCLEOTIDE SEQUENCE [LARGE SCALE GENOMIC DNA]</scope>
    <source>
        <strain>ATCC 700532 / DSM 15464 / FAM18</strain>
    </source>
</reference>
<protein>
    <recommendedName>
        <fullName evidence="1">Small ribosomal subunit protein uS17</fullName>
    </recommendedName>
    <alternativeName>
        <fullName evidence="2">30S ribosomal protein S17</fullName>
    </alternativeName>
</protein>
<comment type="function">
    <text evidence="1">One of the primary rRNA binding proteins, it binds specifically to the 5'-end of 16S ribosomal RNA.</text>
</comment>
<comment type="subunit">
    <text evidence="1">Part of the 30S ribosomal subunit.</text>
</comment>
<comment type="similarity">
    <text evidence="1">Belongs to the universal ribosomal protein uS17 family.</text>
</comment>
<accession>A1KRI2</accession>
<organism>
    <name type="scientific">Neisseria meningitidis serogroup C / serotype 2a (strain ATCC 700532 / DSM 15464 / FAM18)</name>
    <dbReference type="NCBI Taxonomy" id="272831"/>
    <lineage>
        <taxon>Bacteria</taxon>
        <taxon>Pseudomonadati</taxon>
        <taxon>Pseudomonadota</taxon>
        <taxon>Betaproteobacteria</taxon>
        <taxon>Neisseriales</taxon>
        <taxon>Neisseriaceae</taxon>
        <taxon>Neisseria</taxon>
    </lineage>
</organism>
<feature type="chain" id="PRO_1000054982" description="Small ribosomal subunit protein uS17">
    <location>
        <begin position="1"/>
        <end position="87"/>
    </location>
</feature>
<proteinExistence type="inferred from homology"/>
<name>RS17_NEIMF</name>
<evidence type="ECO:0000255" key="1">
    <source>
        <dbReference type="HAMAP-Rule" id="MF_01345"/>
    </source>
</evidence>
<evidence type="ECO:0000305" key="2"/>
<gene>
    <name evidence="1" type="primary">rpsQ</name>
    <name type="ordered locus">NMC0141</name>
</gene>
<sequence length="87" mass="9830">MSETKNVRTLQGKVVSDKMDKTVTVLVERKVKHPLYGKIIRLSTKIHAHDENNQYGIGDVVVISESRPLSKTKSWVVSELVEKARSI</sequence>
<keyword id="KW-0687">Ribonucleoprotein</keyword>
<keyword id="KW-0689">Ribosomal protein</keyword>
<keyword id="KW-0694">RNA-binding</keyword>
<keyword id="KW-0699">rRNA-binding</keyword>
<dbReference type="EMBL" id="AM421808">
    <property type="protein sequence ID" value="CAM09460.1"/>
    <property type="molecule type" value="Genomic_DNA"/>
</dbReference>
<dbReference type="RefSeq" id="WP_002215433.1">
    <property type="nucleotide sequence ID" value="NC_008767.1"/>
</dbReference>
<dbReference type="SMR" id="A1KRI2"/>
<dbReference type="GeneID" id="93387226"/>
<dbReference type="KEGG" id="nmc:NMC0141"/>
<dbReference type="HOGENOM" id="CLU_073626_1_1_4"/>
<dbReference type="Proteomes" id="UP000002286">
    <property type="component" value="Chromosome"/>
</dbReference>
<dbReference type="GO" id="GO:0022627">
    <property type="term" value="C:cytosolic small ribosomal subunit"/>
    <property type="evidence" value="ECO:0007669"/>
    <property type="project" value="TreeGrafter"/>
</dbReference>
<dbReference type="GO" id="GO:0019843">
    <property type="term" value="F:rRNA binding"/>
    <property type="evidence" value="ECO:0007669"/>
    <property type="project" value="UniProtKB-UniRule"/>
</dbReference>
<dbReference type="GO" id="GO:0003735">
    <property type="term" value="F:structural constituent of ribosome"/>
    <property type="evidence" value="ECO:0007669"/>
    <property type="project" value="InterPro"/>
</dbReference>
<dbReference type="GO" id="GO:0006412">
    <property type="term" value="P:translation"/>
    <property type="evidence" value="ECO:0007669"/>
    <property type="project" value="UniProtKB-UniRule"/>
</dbReference>
<dbReference type="CDD" id="cd00364">
    <property type="entry name" value="Ribosomal_uS17"/>
    <property type="match status" value="1"/>
</dbReference>
<dbReference type="FunFam" id="2.40.50.140:FF:000014">
    <property type="entry name" value="30S ribosomal protein S17"/>
    <property type="match status" value="1"/>
</dbReference>
<dbReference type="Gene3D" id="2.40.50.140">
    <property type="entry name" value="Nucleic acid-binding proteins"/>
    <property type="match status" value="1"/>
</dbReference>
<dbReference type="HAMAP" id="MF_01345_B">
    <property type="entry name" value="Ribosomal_uS17_B"/>
    <property type="match status" value="1"/>
</dbReference>
<dbReference type="InterPro" id="IPR012340">
    <property type="entry name" value="NA-bd_OB-fold"/>
</dbReference>
<dbReference type="InterPro" id="IPR000266">
    <property type="entry name" value="Ribosomal_uS17"/>
</dbReference>
<dbReference type="InterPro" id="IPR019984">
    <property type="entry name" value="Ribosomal_uS17_bact/chlr"/>
</dbReference>
<dbReference type="InterPro" id="IPR019979">
    <property type="entry name" value="Ribosomal_uS17_CS"/>
</dbReference>
<dbReference type="NCBIfam" id="NF004123">
    <property type="entry name" value="PRK05610.1"/>
    <property type="match status" value="1"/>
</dbReference>
<dbReference type="NCBIfam" id="TIGR03635">
    <property type="entry name" value="uS17_bact"/>
    <property type="match status" value="1"/>
</dbReference>
<dbReference type="PANTHER" id="PTHR10744">
    <property type="entry name" value="40S RIBOSOMAL PROTEIN S11 FAMILY MEMBER"/>
    <property type="match status" value="1"/>
</dbReference>
<dbReference type="PANTHER" id="PTHR10744:SF1">
    <property type="entry name" value="SMALL RIBOSOMAL SUBUNIT PROTEIN US17M"/>
    <property type="match status" value="1"/>
</dbReference>
<dbReference type="Pfam" id="PF00366">
    <property type="entry name" value="Ribosomal_S17"/>
    <property type="match status" value="1"/>
</dbReference>
<dbReference type="PRINTS" id="PR00973">
    <property type="entry name" value="RIBOSOMALS17"/>
</dbReference>
<dbReference type="SUPFAM" id="SSF50249">
    <property type="entry name" value="Nucleic acid-binding proteins"/>
    <property type="match status" value="1"/>
</dbReference>
<dbReference type="PROSITE" id="PS00056">
    <property type="entry name" value="RIBOSOMAL_S17"/>
    <property type="match status" value="1"/>
</dbReference>